<comment type="function">
    <text evidence="1">Component of the MICOS complex, a large protein complex of the mitochondrial inner membrane that plays crucial roles in the maintenance of crista junctions, inner membrane architecture, and formation of contact sites to the outer membrane.</text>
</comment>
<comment type="subunit">
    <text evidence="1">Component of the mitochondrial contact site and cristae organizing system (MICOS) complex.</text>
</comment>
<comment type="subcellular location">
    <subcellularLocation>
        <location evidence="1">Mitochondrion inner membrane</location>
        <topology evidence="3">Multi-pass membrane protein</topology>
    </subcellularLocation>
</comment>
<comment type="similarity">
    <text evidence="3">Belongs to the apolipoprotein O/MICOS complex subunit Mic27 family.</text>
</comment>
<protein>
    <recommendedName>
        <fullName>MICOS complex subunit MIC27</fullName>
    </recommendedName>
</protein>
<reference key="1">
    <citation type="journal article" date="2009" name="Genome Res.">
        <title>Genome structure of a Saccharomyces cerevisiae strain widely used in bioethanol production.</title>
        <authorList>
            <person name="Argueso J.L."/>
            <person name="Carazzolle M.F."/>
            <person name="Mieczkowski P.A."/>
            <person name="Duarte F.M."/>
            <person name="Netto O.V.C."/>
            <person name="Missawa S.K."/>
            <person name="Galzerani F."/>
            <person name="Costa G.G.L."/>
            <person name="Vidal R.O."/>
            <person name="Noronha M.F."/>
            <person name="Dominska M."/>
            <person name="Andrietta M.G.S."/>
            <person name="Andrietta S.R."/>
            <person name="Cunha A.F."/>
            <person name="Gomes L.H."/>
            <person name="Tavares F.C.A."/>
            <person name="Alcarde A.R."/>
            <person name="Dietrich F.S."/>
            <person name="McCusker J.H."/>
            <person name="Petes T.D."/>
            <person name="Pereira G.A.G."/>
        </authorList>
    </citation>
    <scope>NUCLEOTIDE SEQUENCE [LARGE SCALE GENOMIC DNA]</scope>
    <source>
        <strain>JAY291</strain>
    </source>
</reference>
<organism>
    <name type="scientific">Saccharomyces cerevisiae (strain JAY291)</name>
    <name type="common">Baker's yeast</name>
    <dbReference type="NCBI Taxonomy" id="574961"/>
    <lineage>
        <taxon>Eukaryota</taxon>
        <taxon>Fungi</taxon>
        <taxon>Dikarya</taxon>
        <taxon>Ascomycota</taxon>
        <taxon>Saccharomycotina</taxon>
        <taxon>Saccharomycetes</taxon>
        <taxon>Saccharomycetales</taxon>
        <taxon>Saccharomycetaceae</taxon>
        <taxon>Saccharomyces</taxon>
    </lineage>
</organism>
<name>MIC27_YEAS2</name>
<dbReference type="EMBL" id="ACFL01000140">
    <property type="protein sequence ID" value="EEU06691.1"/>
    <property type="molecule type" value="Genomic_DNA"/>
</dbReference>
<dbReference type="SMR" id="C7GR78"/>
<dbReference type="Proteomes" id="UP000008073">
    <property type="component" value="Unassembled WGS sequence"/>
</dbReference>
<dbReference type="GO" id="GO:0005743">
    <property type="term" value="C:mitochondrial inner membrane"/>
    <property type="evidence" value="ECO:0007669"/>
    <property type="project" value="UniProtKB-SubCell"/>
</dbReference>
<evidence type="ECO:0000250" key="1"/>
<evidence type="ECO:0000255" key="2"/>
<evidence type="ECO:0000305" key="3"/>
<feature type="chain" id="PRO_0000399838" description="MICOS complex subunit MIC27">
    <location>
        <begin position="1"/>
        <end position="234"/>
    </location>
</feature>
<feature type="topological domain" description="Mitochondrial intermembrane" evidence="2">
    <location>
        <begin position="1"/>
        <end position="100"/>
    </location>
</feature>
<feature type="transmembrane region" description="Helical" evidence="2">
    <location>
        <begin position="101"/>
        <end position="120"/>
    </location>
</feature>
<feature type="topological domain" description="Mitochondrial matrix" evidence="2">
    <location>
        <begin position="121"/>
        <end position="141"/>
    </location>
</feature>
<feature type="transmembrane region" description="Helical" evidence="2">
    <location>
        <begin position="142"/>
        <end position="161"/>
    </location>
</feature>
<feature type="topological domain" description="Mitochondrial intermembrane" evidence="2">
    <location>
        <begin position="162"/>
        <end position="234"/>
    </location>
</feature>
<gene>
    <name type="primary">MIC27</name>
    <name type="ORF">C1Q_02851</name>
</gene>
<keyword id="KW-0472">Membrane</keyword>
<keyword id="KW-0496">Mitochondrion</keyword>
<keyword id="KW-0999">Mitochondrion inner membrane</keyword>
<keyword id="KW-0812">Transmembrane</keyword>
<keyword id="KW-1133">Transmembrane helix</keyword>
<accession>C7GR78</accession>
<proteinExistence type="inferred from homology"/>
<sequence length="234" mass="26960">MVNFYDDVDESKSHGEFPLIPVVLQNSSELSVRTIPTGNEIIESVHLTKWLRKYRNALASQLDRYEKGWQSKIANFRLQVQHVINYSRKNIFNVDSENKHTVVPGSLIALGAFFAGSIAVNRSNWGAKRLIFGHKSSILEKLCTSLPSRILLPWVLAAATFKYWAPQTSQNLVNATENDLLPADFVKSYHNTWKRIYEEGYVAKKCDLKRQIDQTLQKNIRYAREQLYEKLEQA</sequence>